<keyword id="KW-0963">Cytoplasm</keyword>
<keyword id="KW-0620">Polyamine biosynthesis</keyword>
<keyword id="KW-0745">Spermidine biosynthesis</keyword>
<keyword id="KW-0808">Transferase</keyword>
<sequence length="291" mass="32809">MVSVPGPVSLIEPLSGNTILVIKINALHVVKRSKYQEIIIADTEDFGRALILDEYIQSSYYDEAYYHESLVHPAMVTHISPRDVLILGGGEGATLREALKHSTVKRAVMVDIDEDVVELSKKYLPQMHQGVFEDPRAQVVIEDGFVYVEKALKNGDKFDVVIMDLTDPYSSEIAKQLYSPEFFKKLVGLLREDGIIVTQAGNSFFFPEAYDMVLHGVKSSFPVVAEYNVWIPSFGYAVNYIIGSLKYDPTSLTAEEVEKRLKERGVKTLFYSGKTHVGLMNLPIYRKIRHV</sequence>
<accession>A1RU43</accession>
<dbReference type="EC" id="2.5.1.16" evidence="1"/>
<dbReference type="EMBL" id="CP000504">
    <property type="protein sequence ID" value="ABL88475.1"/>
    <property type="molecule type" value="Genomic_DNA"/>
</dbReference>
<dbReference type="RefSeq" id="WP_011763050.1">
    <property type="nucleotide sequence ID" value="NC_008701.1"/>
</dbReference>
<dbReference type="SMR" id="A1RU43"/>
<dbReference type="STRING" id="384616.Pisl_1312"/>
<dbReference type="GeneID" id="4617821"/>
<dbReference type="KEGG" id="pis:Pisl_1312"/>
<dbReference type="eggNOG" id="arCOG00050">
    <property type="taxonomic scope" value="Archaea"/>
</dbReference>
<dbReference type="HOGENOM" id="CLU_048199_0_1_2"/>
<dbReference type="OrthoDB" id="10538at2157"/>
<dbReference type="UniPathway" id="UPA00248">
    <property type="reaction ID" value="UER00314"/>
</dbReference>
<dbReference type="Proteomes" id="UP000002595">
    <property type="component" value="Chromosome"/>
</dbReference>
<dbReference type="GO" id="GO:0005737">
    <property type="term" value="C:cytoplasm"/>
    <property type="evidence" value="ECO:0007669"/>
    <property type="project" value="UniProtKB-SubCell"/>
</dbReference>
<dbReference type="GO" id="GO:0004766">
    <property type="term" value="F:spermidine synthase activity"/>
    <property type="evidence" value="ECO:0007669"/>
    <property type="project" value="UniProtKB-UniRule"/>
</dbReference>
<dbReference type="GO" id="GO:0010487">
    <property type="term" value="F:thermospermine synthase activity"/>
    <property type="evidence" value="ECO:0007669"/>
    <property type="project" value="UniProtKB-ARBA"/>
</dbReference>
<dbReference type="GO" id="GO:0008295">
    <property type="term" value="P:spermidine biosynthetic process"/>
    <property type="evidence" value="ECO:0007669"/>
    <property type="project" value="UniProtKB-UniRule"/>
</dbReference>
<dbReference type="CDD" id="cd02440">
    <property type="entry name" value="AdoMet_MTases"/>
    <property type="match status" value="1"/>
</dbReference>
<dbReference type="FunFam" id="3.40.50.150:FF:000088">
    <property type="entry name" value="Polyamine aminopropyltransferase"/>
    <property type="match status" value="1"/>
</dbReference>
<dbReference type="Gene3D" id="2.30.140.10">
    <property type="entry name" value="Spermidine synthase, tetramerisation domain"/>
    <property type="match status" value="1"/>
</dbReference>
<dbReference type="Gene3D" id="3.40.50.150">
    <property type="entry name" value="Vaccinia Virus protein VP39"/>
    <property type="match status" value="1"/>
</dbReference>
<dbReference type="HAMAP" id="MF_00198">
    <property type="entry name" value="Spermidine_synth"/>
    <property type="match status" value="1"/>
</dbReference>
<dbReference type="InterPro" id="IPR030374">
    <property type="entry name" value="PABS"/>
</dbReference>
<dbReference type="InterPro" id="IPR030373">
    <property type="entry name" value="PABS_CS"/>
</dbReference>
<dbReference type="InterPro" id="IPR029063">
    <property type="entry name" value="SAM-dependent_MTases_sf"/>
</dbReference>
<dbReference type="InterPro" id="IPR001045">
    <property type="entry name" value="Spermi_synthase"/>
</dbReference>
<dbReference type="InterPro" id="IPR035246">
    <property type="entry name" value="Spermidine_synt_N"/>
</dbReference>
<dbReference type="InterPro" id="IPR037163">
    <property type="entry name" value="Spermidine_synt_N_sf"/>
</dbReference>
<dbReference type="NCBIfam" id="NF002010">
    <property type="entry name" value="PRK00811.1"/>
    <property type="match status" value="1"/>
</dbReference>
<dbReference type="PANTHER" id="PTHR43317">
    <property type="entry name" value="THERMOSPERMINE SYNTHASE ACAULIS5"/>
    <property type="match status" value="1"/>
</dbReference>
<dbReference type="PANTHER" id="PTHR43317:SF1">
    <property type="entry name" value="THERMOSPERMINE SYNTHASE ACAULIS5"/>
    <property type="match status" value="1"/>
</dbReference>
<dbReference type="Pfam" id="PF17284">
    <property type="entry name" value="Spermine_synt_N"/>
    <property type="match status" value="1"/>
</dbReference>
<dbReference type="Pfam" id="PF01564">
    <property type="entry name" value="Spermine_synth"/>
    <property type="match status" value="1"/>
</dbReference>
<dbReference type="SUPFAM" id="SSF53335">
    <property type="entry name" value="S-adenosyl-L-methionine-dependent methyltransferases"/>
    <property type="match status" value="1"/>
</dbReference>
<dbReference type="PROSITE" id="PS01330">
    <property type="entry name" value="PABS_1"/>
    <property type="match status" value="1"/>
</dbReference>
<dbReference type="PROSITE" id="PS51006">
    <property type="entry name" value="PABS_2"/>
    <property type="match status" value="1"/>
</dbReference>
<protein>
    <recommendedName>
        <fullName evidence="1">Polyamine aminopropyltransferase</fullName>
    </recommendedName>
    <alternativeName>
        <fullName evidence="1">Putrescine aminopropyltransferase</fullName>
        <shortName evidence="1">PAPT</shortName>
    </alternativeName>
    <alternativeName>
        <fullName evidence="1">Spermidine synthase</fullName>
        <shortName evidence="1">SPDS</shortName>
        <shortName evidence="1">SPDSY</shortName>
        <ecNumber evidence="1">2.5.1.16</ecNumber>
    </alternativeName>
</protein>
<organism>
    <name type="scientific">Pyrobaculum islandicum (strain DSM 4184 / JCM 9189 / GEO3)</name>
    <dbReference type="NCBI Taxonomy" id="384616"/>
    <lineage>
        <taxon>Archaea</taxon>
        <taxon>Thermoproteota</taxon>
        <taxon>Thermoprotei</taxon>
        <taxon>Thermoproteales</taxon>
        <taxon>Thermoproteaceae</taxon>
        <taxon>Pyrobaculum</taxon>
    </lineage>
</organism>
<evidence type="ECO:0000255" key="1">
    <source>
        <dbReference type="HAMAP-Rule" id="MF_00198"/>
    </source>
</evidence>
<gene>
    <name evidence="1" type="primary">speE</name>
    <name type="ordered locus">Pisl_1312</name>
</gene>
<reference key="1">
    <citation type="submission" date="2006-12" db="EMBL/GenBank/DDBJ databases">
        <title>Complete sequence of Pyrobaculum islandicum DSM 4184.</title>
        <authorList>
            <person name="Copeland A."/>
            <person name="Lucas S."/>
            <person name="Lapidus A."/>
            <person name="Barry K."/>
            <person name="Detter J.C."/>
            <person name="Glavina del Rio T."/>
            <person name="Dalin E."/>
            <person name="Tice H."/>
            <person name="Pitluck S."/>
            <person name="Meincke L."/>
            <person name="Brettin T."/>
            <person name="Bruce D."/>
            <person name="Han C."/>
            <person name="Tapia R."/>
            <person name="Gilna P."/>
            <person name="Schmutz J."/>
            <person name="Larimer F."/>
            <person name="Land M."/>
            <person name="Hauser L."/>
            <person name="Kyrpides N."/>
            <person name="Mikhailova N."/>
            <person name="Cozen A.E."/>
            <person name="Fitz-Gibbon S.T."/>
            <person name="House C.H."/>
            <person name="Saltikov C."/>
            <person name="Lowe T."/>
            <person name="Richardson P."/>
        </authorList>
    </citation>
    <scope>NUCLEOTIDE SEQUENCE [LARGE SCALE GENOMIC DNA]</scope>
    <source>
        <strain>DSM 4184 / JCM 9189 / GEO3</strain>
    </source>
</reference>
<comment type="function">
    <text evidence="1">Catalyzes the irreversible transfer of a propylamine group from the amino donor S-adenosylmethioninamine (decarboxy-AdoMet) to putrescine (1,4-diaminobutane) to yield spermidine.</text>
</comment>
<comment type="catalytic activity">
    <reaction evidence="1">
        <text>S-adenosyl 3-(methylsulfanyl)propylamine + putrescine = S-methyl-5'-thioadenosine + spermidine + H(+)</text>
        <dbReference type="Rhea" id="RHEA:12721"/>
        <dbReference type="ChEBI" id="CHEBI:15378"/>
        <dbReference type="ChEBI" id="CHEBI:17509"/>
        <dbReference type="ChEBI" id="CHEBI:57443"/>
        <dbReference type="ChEBI" id="CHEBI:57834"/>
        <dbReference type="ChEBI" id="CHEBI:326268"/>
        <dbReference type="EC" id="2.5.1.16"/>
    </reaction>
</comment>
<comment type="pathway">
    <text evidence="1">Amine and polyamine biosynthesis; spermidine biosynthesis; spermidine from putrescine: step 1/1.</text>
</comment>
<comment type="subunit">
    <text evidence="1">Homodimer or homotetramer.</text>
</comment>
<comment type="subcellular location">
    <subcellularLocation>
        <location evidence="1">Cytoplasm</location>
    </subcellularLocation>
</comment>
<comment type="similarity">
    <text evidence="1">Belongs to the spermidine/spermine synthase family.</text>
</comment>
<name>SPEE_PYRIL</name>
<proteinExistence type="inferred from homology"/>
<feature type="chain" id="PRO_1000012014" description="Polyamine aminopropyltransferase">
    <location>
        <begin position="1"/>
        <end position="291"/>
    </location>
</feature>
<feature type="domain" description="PABS" evidence="1">
    <location>
        <begin position="5"/>
        <end position="245"/>
    </location>
</feature>
<feature type="active site" description="Proton acceptor" evidence="1">
    <location>
        <position position="164"/>
    </location>
</feature>
<feature type="binding site" evidence="1">
    <location>
        <position position="36"/>
    </location>
    <ligand>
        <name>S-methyl-5'-thioadenosine</name>
        <dbReference type="ChEBI" id="CHEBI:17509"/>
    </ligand>
</feature>
<feature type="binding site" evidence="1">
    <location>
        <position position="67"/>
    </location>
    <ligand>
        <name>spermidine</name>
        <dbReference type="ChEBI" id="CHEBI:57834"/>
    </ligand>
</feature>
<feature type="binding site" evidence="1">
    <location>
        <position position="91"/>
    </location>
    <ligand>
        <name>spermidine</name>
        <dbReference type="ChEBI" id="CHEBI:57834"/>
    </ligand>
</feature>
<feature type="binding site" evidence="1">
    <location>
        <position position="111"/>
    </location>
    <ligand>
        <name>S-methyl-5'-thioadenosine</name>
        <dbReference type="ChEBI" id="CHEBI:17509"/>
    </ligand>
</feature>
<feature type="binding site" evidence="1">
    <location>
        <begin position="143"/>
        <end position="144"/>
    </location>
    <ligand>
        <name>S-methyl-5'-thioadenosine</name>
        <dbReference type="ChEBI" id="CHEBI:17509"/>
    </ligand>
</feature>